<comment type="function">
    <text evidence="1">May be involved in the intracellular transport of sterols or other lipids. May bind cholesterol or other sterols (By similarity).</text>
</comment>
<proteinExistence type="evidence at protein level"/>
<protein>
    <recommendedName>
        <fullName>StAR-related lipid transfer protein 6</fullName>
    </recommendedName>
    <alternativeName>
        <fullName>START domain-containing protein 6</fullName>
        <shortName>StARD6</shortName>
    </alternativeName>
</protein>
<reference key="1">
    <citation type="journal article" date="2002" name="Proc. Natl. Acad. Sci. U.S.A.">
        <title>The cholesterol-regulated StarD4 gene encodes a StAR-related lipid transfer protein with two closely related homologues, StarD5 and StarD6.</title>
        <authorList>
            <person name="Soccio R.E."/>
            <person name="Adams R.M."/>
            <person name="Romanowski M.J."/>
            <person name="Sehayek E."/>
            <person name="Burley S.K."/>
            <person name="Breslow J.L."/>
        </authorList>
    </citation>
    <scope>NUCLEOTIDE SEQUENCE [MRNA]</scope>
</reference>
<sequence length="220" mass="25022">MDFKAIAQQTAQEVLGYNRDTSGWKVVKTSKKITVSSKASRKFHGNLYRVEGIIPESPAKLSDFLYQTGDRITWDKSLQVYNMVHRIDSDTFICHTITQSFAVGSISPRDFIDLVYIKRYEGNMNIISSKSVDFPEYPPSSNYIRGYNHPCGFVCSPMEENPAYSKLVMFVQTEMRGKLSPSIIEKTMPSNLVNFILNAKDGIKAHRTPSRRGFHHNSHS</sequence>
<keyword id="KW-0002">3D-structure</keyword>
<keyword id="KW-0445">Lipid transport</keyword>
<keyword id="KW-0446">Lipid-binding</keyword>
<keyword id="KW-1185">Reference proteome</keyword>
<keyword id="KW-0813">Transport</keyword>
<evidence type="ECO:0000250" key="1"/>
<evidence type="ECO:0000255" key="2">
    <source>
        <dbReference type="PROSITE-ProRule" id="PRU00197"/>
    </source>
</evidence>
<evidence type="ECO:0007829" key="3">
    <source>
        <dbReference type="PDB" id="2MOU"/>
    </source>
</evidence>
<dbReference type="EMBL" id="AF480305">
    <property type="protein sequence ID" value="AAL89655.1"/>
    <property type="molecule type" value="mRNA"/>
</dbReference>
<dbReference type="CCDS" id="CCDS11955.1"/>
<dbReference type="RefSeq" id="NP_631910.1">
    <property type="nucleotide sequence ID" value="NM_139171.2"/>
</dbReference>
<dbReference type="RefSeq" id="XP_011524123.1">
    <property type="nucleotide sequence ID" value="XM_011525821.1"/>
</dbReference>
<dbReference type="PDB" id="2MOU">
    <property type="method" value="NMR"/>
    <property type="chains" value="A=1-220"/>
</dbReference>
<dbReference type="PDBsum" id="2MOU"/>
<dbReference type="BMRB" id="P59095"/>
<dbReference type="SMR" id="P59095"/>
<dbReference type="BioGRID" id="127052">
    <property type="interactions" value="6"/>
</dbReference>
<dbReference type="FunCoup" id="P59095">
    <property type="interactions" value="4"/>
</dbReference>
<dbReference type="IntAct" id="P59095">
    <property type="interactions" value="3"/>
</dbReference>
<dbReference type="STRING" id="9606.ENSP00000462349"/>
<dbReference type="SwissLipids" id="SLP:000000717"/>
<dbReference type="GlyGen" id="P59095">
    <property type="glycosylation" value="2 sites, 1 O-linked glycan (2 sites)"/>
</dbReference>
<dbReference type="iPTMnet" id="P59095"/>
<dbReference type="PhosphoSitePlus" id="P59095"/>
<dbReference type="BioMuta" id="STARD6"/>
<dbReference type="DMDM" id="25091297"/>
<dbReference type="MassIVE" id="P59095"/>
<dbReference type="PaxDb" id="9606-ENSP00000462349"/>
<dbReference type="ProteomicsDB" id="57132"/>
<dbReference type="Antibodypedia" id="58888">
    <property type="antibodies" value="67 antibodies from 15 providers"/>
</dbReference>
<dbReference type="DNASU" id="147323"/>
<dbReference type="Ensembl" id="ENST00000307844.4">
    <property type="protein sequence ID" value="ENSP00000310814.3"/>
    <property type="gene ID" value="ENSG00000174448.9"/>
</dbReference>
<dbReference type="Ensembl" id="ENST00000581310.5">
    <property type="protein sequence ID" value="ENSP00000462349.1"/>
    <property type="gene ID" value="ENSG00000174448.9"/>
</dbReference>
<dbReference type="GeneID" id="147323"/>
<dbReference type="KEGG" id="hsa:147323"/>
<dbReference type="MANE-Select" id="ENST00000307844.4">
    <property type="protein sequence ID" value="ENSP00000310814.3"/>
    <property type="RefSeq nucleotide sequence ID" value="NM_139171.2"/>
    <property type="RefSeq protein sequence ID" value="NP_631910.1"/>
</dbReference>
<dbReference type="UCSC" id="uc010xdt.2">
    <property type="organism name" value="human"/>
</dbReference>
<dbReference type="AGR" id="HGNC:18066"/>
<dbReference type="CTD" id="147323"/>
<dbReference type="DisGeNET" id="147323"/>
<dbReference type="GeneCards" id="STARD6"/>
<dbReference type="HGNC" id="HGNC:18066">
    <property type="gene designation" value="STARD6"/>
</dbReference>
<dbReference type="HPA" id="ENSG00000174448">
    <property type="expression patterns" value="Tissue enriched (testis)"/>
</dbReference>
<dbReference type="MIM" id="607051">
    <property type="type" value="gene"/>
</dbReference>
<dbReference type="neXtProt" id="NX_P59095"/>
<dbReference type="OpenTargets" id="ENSG00000174448"/>
<dbReference type="PharmGKB" id="PA38287"/>
<dbReference type="VEuPathDB" id="HostDB:ENSG00000174448"/>
<dbReference type="eggNOG" id="KOG3845">
    <property type="taxonomic scope" value="Eukaryota"/>
</dbReference>
<dbReference type="GeneTree" id="ENSGT00940000161788"/>
<dbReference type="HOGENOM" id="CLU_093200_1_0_1"/>
<dbReference type="InParanoid" id="P59095"/>
<dbReference type="OMA" id="YEGNMDI"/>
<dbReference type="OrthoDB" id="196858at2759"/>
<dbReference type="PAN-GO" id="P59095">
    <property type="GO annotations" value="0 GO annotations based on evolutionary models"/>
</dbReference>
<dbReference type="PhylomeDB" id="P59095"/>
<dbReference type="PathwayCommons" id="P59095"/>
<dbReference type="Reactome" id="R-HSA-196108">
    <property type="pathway name" value="Pregnenolone biosynthesis"/>
</dbReference>
<dbReference type="SignaLink" id="P59095"/>
<dbReference type="BioGRID-ORCS" id="147323">
    <property type="hits" value="15 hits in 1142 CRISPR screens"/>
</dbReference>
<dbReference type="EvolutionaryTrace" id="P59095"/>
<dbReference type="GenomeRNAi" id="147323"/>
<dbReference type="Pharos" id="P59095">
    <property type="development level" value="Tbio"/>
</dbReference>
<dbReference type="PRO" id="PR:P59095"/>
<dbReference type="Proteomes" id="UP000005640">
    <property type="component" value="Chromosome 18"/>
</dbReference>
<dbReference type="RNAct" id="P59095">
    <property type="molecule type" value="protein"/>
</dbReference>
<dbReference type="Bgee" id="ENSG00000174448">
    <property type="expression patterns" value="Expressed in left testis and 70 other cell types or tissues"/>
</dbReference>
<dbReference type="ExpressionAtlas" id="P59095">
    <property type="expression patterns" value="baseline and differential"/>
</dbReference>
<dbReference type="GO" id="GO:0008289">
    <property type="term" value="F:lipid binding"/>
    <property type="evidence" value="ECO:0007669"/>
    <property type="project" value="UniProtKB-KW"/>
</dbReference>
<dbReference type="GO" id="GO:0006869">
    <property type="term" value="P:lipid transport"/>
    <property type="evidence" value="ECO:0007669"/>
    <property type="project" value="UniProtKB-KW"/>
</dbReference>
<dbReference type="CDD" id="cd08904">
    <property type="entry name" value="START_STARD6-like"/>
    <property type="match status" value="1"/>
</dbReference>
<dbReference type="Gene3D" id="3.30.530.20">
    <property type="match status" value="1"/>
</dbReference>
<dbReference type="InterPro" id="IPR043556">
    <property type="entry name" value="StARD5/6"/>
</dbReference>
<dbReference type="InterPro" id="IPR023393">
    <property type="entry name" value="START-like_dom_sf"/>
</dbReference>
<dbReference type="InterPro" id="IPR002913">
    <property type="entry name" value="START_lipid-bd_dom"/>
</dbReference>
<dbReference type="PANTHER" id="PTHR46374">
    <property type="entry name" value="PROTEIN CBG07384"/>
    <property type="match status" value="1"/>
</dbReference>
<dbReference type="PANTHER" id="PTHR46374:SF2">
    <property type="entry name" value="STAR-RELATED LIPID TRANSFER PROTEIN 6"/>
    <property type="match status" value="1"/>
</dbReference>
<dbReference type="Pfam" id="PF01852">
    <property type="entry name" value="START"/>
    <property type="match status" value="1"/>
</dbReference>
<dbReference type="SMART" id="SM00234">
    <property type="entry name" value="START"/>
    <property type="match status" value="1"/>
</dbReference>
<dbReference type="SUPFAM" id="SSF55961">
    <property type="entry name" value="Bet v1-like"/>
    <property type="match status" value="1"/>
</dbReference>
<dbReference type="PROSITE" id="PS50848">
    <property type="entry name" value="START"/>
    <property type="match status" value="1"/>
</dbReference>
<organism>
    <name type="scientific">Homo sapiens</name>
    <name type="common">Human</name>
    <dbReference type="NCBI Taxonomy" id="9606"/>
    <lineage>
        <taxon>Eukaryota</taxon>
        <taxon>Metazoa</taxon>
        <taxon>Chordata</taxon>
        <taxon>Craniata</taxon>
        <taxon>Vertebrata</taxon>
        <taxon>Euteleostomi</taxon>
        <taxon>Mammalia</taxon>
        <taxon>Eutheria</taxon>
        <taxon>Euarchontoglires</taxon>
        <taxon>Primates</taxon>
        <taxon>Haplorrhini</taxon>
        <taxon>Catarrhini</taxon>
        <taxon>Hominidae</taxon>
        <taxon>Homo</taxon>
    </lineage>
</organism>
<gene>
    <name type="primary">STARD6</name>
</gene>
<name>STAR6_HUMAN</name>
<accession>P59095</accession>
<feature type="chain" id="PRO_0000220672" description="StAR-related lipid transfer protein 6">
    <location>
        <begin position="1"/>
        <end position="220"/>
    </location>
</feature>
<feature type="domain" description="START" evidence="2">
    <location>
        <begin position="1"/>
        <end position="208"/>
    </location>
</feature>
<feature type="sequence variant" id="VAR_024651" description="In dbSNP:rs2917782.">
    <original>E</original>
    <variation>K</variation>
    <location>
        <position position="159"/>
    </location>
</feature>
<feature type="helix" evidence="3">
    <location>
        <begin position="3"/>
        <end position="18"/>
    </location>
</feature>
<feature type="strand" evidence="3">
    <location>
        <begin position="26"/>
        <end position="29"/>
    </location>
</feature>
<feature type="strand" evidence="3">
    <location>
        <begin position="31"/>
        <end position="37"/>
    </location>
</feature>
<feature type="strand" evidence="3">
    <location>
        <begin position="41"/>
        <end position="45"/>
    </location>
</feature>
<feature type="strand" evidence="3">
    <location>
        <begin position="48"/>
        <end position="56"/>
    </location>
</feature>
<feature type="helix" evidence="3">
    <location>
        <begin position="58"/>
        <end position="64"/>
    </location>
</feature>
<feature type="strand" evidence="3">
    <location>
        <begin position="65"/>
        <end position="70"/>
    </location>
</feature>
<feature type="turn" evidence="3">
    <location>
        <begin position="71"/>
        <end position="73"/>
    </location>
</feature>
<feature type="strand" evidence="3">
    <location>
        <begin position="76"/>
        <end position="83"/>
    </location>
</feature>
<feature type="strand" evidence="3">
    <location>
        <begin position="88"/>
        <end position="98"/>
    </location>
</feature>
<feature type="strand" evidence="3">
    <location>
        <begin position="109"/>
        <end position="120"/>
    </location>
</feature>
<feature type="turn" evidence="3">
    <location>
        <begin position="121"/>
        <end position="123"/>
    </location>
</feature>
<feature type="strand" evidence="3">
    <location>
        <begin position="124"/>
        <end position="131"/>
    </location>
</feature>
<feature type="strand" evidence="3">
    <location>
        <begin position="141"/>
        <end position="145"/>
    </location>
</feature>
<feature type="strand" evidence="3">
    <location>
        <begin position="148"/>
        <end position="158"/>
    </location>
</feature>
<feature type="strand" evidence="3">
    <location>
        <begin position="161"/>
        <end position="173"/>
    </location>
</feature>
<feature type="helix" evidence="3">
    <location>
        <begin position="181"/>
        <end position="207"/>
    </location>
</feature>